<sequence>MNAVDYLRISLIDRCNFRCQYCMPDTQDLQFLQPTAVLTATELLTLIRDVFIPLGFARFRLTGGEPLLRPDILDIVRGVIALPQVKDLAMTTNAFLLEPLAQDLFEAGLRRINISLDSLVPETFATIVGRDSQRHKRWNKVWAGIQKAYQVGFNPLKLNVVIIPGVNDHEVLDLAALTIDRQWHVRFIEFMPIGNADLFCDRGWIPSEELRTQIRDRWGLTDGQVQGNGPADVFQIPGAQGTLGFISQMSECFCDRCNRMRLSADGWLRPCLLNETGQLDLKTALRDGVSTDELRDRVRQLLELKPEINYKERQSGTVGANYSRTMSQIGG</sequence>
<feature type="chain" id="PRO_1000085691" description="GTP 3',8-cyclase">
    <location>
        <begin position="1"/>
        <end position="331"/>
    </location>
</feature>
<feature type="domain" description="Radical SAM core" evidence="2">
    <location>
        <begin position="1"/>
        <end position="231"/>
    </location>
</feature>
<feature type="binding site" evidence="1">
    <location>
        <position position="8"/>
    </location>
    <ligand>
        <name>GTP</name>
        <dbReference type="ChEBI" id="CHEBI:37565"/>
    </ligand>
</feature>
<feature type="binding site" evidence="1">
    <location>
        <position position="15"/>
    </location>
    <ligand>
        <name>[4Fe-4S] cluster</name>
        <dbReference type="ChEBI" id="CHEBI:49883"/>
        <label>1</label>
        <note>4Fe-4S-S-AdoMet</note>
    </ligand>
</feature>
<feature type="binding site" evidence="1">
    <location>
        <position position="19"/>
    </location>
    <ligand>
        <name>[4Fe-4S] cluster</name>
        <dbReference type="ChEBI" id="CHEBI:49883"/>
        <label>1</label>
        <note>4Fe-4S-S-AdoMet</note>
    </ligand>
</feature>
<feature type="binding site" evidence="1">
    <location>
        <position position="21"/>
    </location>
    <ligand>
        <name>S-adenosyl-L-methionine</name>
        <dbReference type="ChEBI" id="CHEBI:59789"/>
    </ligand>
</feature>
<feature type="binding site" evidence="1">
    <location>
        <position position="22"/>
    </location>
    <ligand>
        <name>[4Fe-4S] cluster</name>
        <dbReference type="ChEBI" id="CHEBI:49883"/>
        <label>1</label>
        <note>4Fe-4S-S-AdoMet</note>
    </ligand>
</feature>
<feature type="binding site" evidence="1">
    <location>
        <position position="60"/>
    </location>
    <ligand>
        <name>GTP</name>
        <dbReference type="ChEBI" id="CHEBI:37565"/>
    </ligand>
</feature>
<feature type="binding site" evidence="1">
    <location>
        <position position="64"/>
    </location>
    <ligand>
        <name>S-adenosyl-L-methionine</name>
        <dbReference type="ChEBI" id="CHEBI:59789"/>
    </ligand>
</feature>
<feature type="binding site" evidence="1">
    <location>
        <position position="91"/>
    </location>
    <ligand>
        <name>GTP</name>
        <dbReference type="ChEBI" id="CHEBI:37565"/>
    </ligand>
</feature>
<feature type="binding site" evidence="1">
    <location>
        <position position="115"/>
    </location>
    <ligand>
        <name>S-adenosyl-L-methionine</name>
        <dbReference type="ChEBI" id="CHEBI:59789"/>
    </ligand>
</feature>
<feature type="binding site" evidence="1">
    <location>
        <position position="157"/>
    </location>
    <ligand>
        <name>GTP</name>
        <dbReference type="ChEBI" id="CHEBI:37565"/>
    </ligand>
</feature>
<feature type="binding site" evidence="1">
    <location>
        <position position="191"/>
    </location>
    <ligand>
        <name>S-adenosyl-L-methionine</name>
        <dbReference type="ChEBI" id="CHEBI:59789"/>
    </ligand>
</feature>
<feature type="binding site" evidence="1">
    <location>
        <position position="254"/>
    </location>
    <ligand>
        <name>[4Fe-4S] cluster</name>
        <dbReference type="ChEBI" id="CHEBI:49883"/>
        <label>2</label>
        <note>4Fe-4S-substrate</note>
    </ligand>
</feature>
<feature type="binding site" evidence="1">
    <location>
        <position position="257"/>
    </location>
    <ligand>
        <name>[4Fe-4S] cluster</name>
        <dbReference type="ChEBI" id="CHEBI:49883"/>
        <label>2</label>
        <note>4Fe-4S-substrate</note>
    </ligand>
</feature>
<feature type="binding site" evidence="1">
    <location>
        <begin position="259"/>
        <end position="261"/>
    </location>
    <ligand>
        <name>GTP</name>
        <dbReference type="ChEBI" id="CHEBI:37565"/>
    </ligand>
</feature>
<feature type="binding site" evidence="1">
    <location>
        <position position="271"/>
    </location>
    <ligand>
        <name>[4Fe-4S] cluster</name>
        <dbReference type="ChEBI" id="CHEBI:49883"/>
        <label>2</label>
        <note>4Fe-4S-substrate</note>
    </ligand>
</feature>
<name>MOAA_ACAM1</name>
<dbReference type="EC" id="4.1.99.22" evidence="1"/>
<dbReference type="EMBL" id="CP000828">
    <property type="protein sequence ID" value="ABW30470.1"/>
    <property type="molecule type" value="Genomic_DNA"/>
</dbReference>
<dbReference type="RefSeq" id="WP_012165700.1">
    <property type="nucleotide sequence ID" value="NC_009925.1"/>
</dbReference>
<dbReference type="SMR" id="B0CDZ6"/>
<dbReference type="STRING" id="329726.AM1_5516"/>
<dbReference type="KEGG" id="amr:AM1_5516"/>
<dbReference type="eggNOG" id="COG2896">
    <property type="taxonomic scope" value="Bacteria"/>
</dbReference>
<dbReference type="HOGENOM" id="CLU_009273_0_1_3"/>
<dbReference type="OrthoDB" id="9763993at2"/>
<dbReference type="UniPathway" id="UPA00344"/>
<dbReference type="Proteomes" id="UP000000268">
    <property type="component" value="Chromosome"/>
</dbReference>
<dbReference type="GO" id="GO:0051539">
    <property type="term" value="F:4 iron, 4 sulfur cluster binding"/>
    <property type="evidence" value="ECO:0007669"/>
    <property type="project" value="UniProtKB-UniRule"/>
</dbReference>
<dbReference type="GO" id="GO:0061799">
    <property type="term" value="F:cyclic pyranopterin monophosphate synthase activity"/>
    <property type="evidence" value="ECO:0007669"/>
    <property type="project" value="TreeGrafter"/>
</dbReference>
<dbReference type="GO" id="GO:0061798">
    <property type="term" value="F:GTP 3',8'-cyclase activity"/>
    <property type="evidence" value="ECO:0007669"/>
    <property type="project" value="UniProtKB-UniRule"/>
</dbReference>
<dbReference type="GO" id="GO:0005525">
    <property type="term" value="F:GTP binding"/>
    <property type="evidence" value="ECO:0007669"/>
    <property type="project" value="UniProtKB-UniRule"/>
</dbReference>
<dbReference type="GO" id="GO:0046872">
    <property type="term" value="F:metal ion binding"/>
    <property type="evidence" value="ECO:0007669"/>
    <property type="project" value="UniProtKB-KW"/>
</dbReference>
<dbReference type="GO" id="GO:1904047">
    <property type="term" value="F:S-adenosyl-L-methionine binding"/>
    <property type="evidence" value="ECO:0007669"/>
    <property type="project" value="UniProtKB-UniRule"/>
</dbReference>
<dbReference type="GO" id="GO:0006777">
    <property type="term" value="P:Mo-molybdopterin cofactor biosynthetic process"/>
    <property type="evidence" value="ECO:0007669"/>
    <property type="project" value="UniProtKB-UniRule"/>
</dbReference>
<dbReference type="CDD" id="cd01335">
    <property type="entry name" value="Radical_SAM"/>
    <property type="match status" value="1"/>
</dbReference>
<dbReference type="CDD" id="cd21117">
    <property type="entry name" value="Twitch_MoaA"/>
    <property type="match status" value="1"/>
</dbReference>
<dbReference type="Gene3D" id="3.20.20.70">
    <property type="entry name" value="Aldolase class I"/>
    <property type="match status" value="1"/>
</dbReference>
<dbReference type="HAMAP" id="MF_01225_B">
    <property type="entry name" value="MoaA_B"/>
    <property type="match status" value="1"/>
</dbReference>
<dbReference type="InterPro" id="IPR013785">
    <property type="entry name" value="Aldolase_TIM"/>
</dbReference>
<dbReference type="InterPro" id="IPR006638">
    <property type="entry name" value="Elp3/MiaA/NifB-like_rSAM"/>
</dbReference>
<dbReference type="InterPro" id="IPR013483">
    <property type="entry name" value="MoaA"/>
</dbReference>
<dbReference type="InterPro" id="IPR000385">
    <property type="entry name" value="MoaA_NifB_PqqE_Fe-S-bd_CS"/>
</dbReference>
<dbReference type="InterPro" id="IPR010505">
    <property type="entry name" value="MoaA_twitch"/>
</dbReference>
<dbReference type="InterPro" id="IPR050105">
    <property type="entry name" value="MoCo_biosynth_MoaA/MoaC"/>
</dbReference>
<dbReference type="InterPro" id="IPR007197">
    <property type="entry name" value="rSAM"/>
</dbReference>
<dbReference type="NCBIfam" id="TIGR02666">
    <property type="entry name" value="moaA"/>
    <property type="match status" value="1"/>
</dbReference>
<dbReference type="PANTHER" id="PTHR22960:SF0">
    <property type="entry name" value="MOLYBDENUM COFACTOR BIOSYNTHESIS PROTEIN 1"/>
    <property type="match status" value="1"/>
</dbReference>
<dbReference type="PANTHER" id="PTHR22960">
    <property type="entry name" value="MOLYBDOPTERIN COFACTOR SYNTHESIS PROTEIN A"/>
    <property type="match status" value="1"/>
</dbReference>
<dbReference type="Pfam" id="PF06463">
    <property type="entry name" value="Mob_synth_C"/>
    <property type="match status" value="1"/>
</dbReference>
<dbReference type="Pfam" id="PF04055">
    <property type="entry name" value="Radical_SAM"/>
    <property type="match status" value="1"/>
</dbReference>
<dbReference type="SFLD" id="SFLDG01383">
    <property type="entry name" value="cyclic_pyranopterin_phosphate"/>
    <property type="match status" value="1"/>
</dbReference>
<dbReference type="SFLD" id="SFLDG01067">
    <property type="entry name" value="SPASM/twitch_domain_containing"/>
    <property type="match status" value="1"/>
</dbReference>
<dbReference type="SMART" id="SM00729">
    <property type="entry name" value="Elp3"/>
    <property type="match status" value="1"/>
</dbReference>
<dbReference type="SUPFAM" id="SSF102114">
    <property type="entry name" value="Radical SAM enzymes"/>
    <property type="match status" value="1"/>
</dbReference>
<dbReference type="PROSITE" id="PS01305">
    <property type="entry name" value="MOAA_NIFB_PQQE"/>
    <property type="match status" value="1"/>
</dbReference>
<dbReference type="PROSITE" id="PS51918">
    <property type="entry name" value="RADICAL_SAM"/>
    <property type="match status" value="1"/>
</dbReference>
<comment type="function">
    <text evidence="1">Catalyzes the cyclization of GTP to (8S)-3',8-cyclo-7,8-dihydroguanosine 5'-triphosphate.</text>
</comment>
<comment type="catalytic activity">
    <reaction evidence="1">
        <text>GTP + AH2 + S-adenosyl-L-methionine = (8S)-3',8-cyclo-7,8-dihydroguanosine 5'-triphosphate + 5'-deoxyadenosine + L-methionine + A + H(+)</text>
        <dbReference type="Rhea" id="RHEA:49576"/>
        <dbReference type="ChEBI" id="CHEBI:13193"/>
        <dbReference type="ChEBI" id="CHEBI:15378"/>
        <dbReference type="ChEBI" id="CHEBI:17319"/>
        <dbReference type="ChEBI" id="CHEBI:17499"/>
        <dbReference type="ChEBI" id="CHEBI:37565"/>
        <dbReference type="ChEBI" id="CHEBI:57844"/>
        <dbReference type="ChEBI" id="CHEBI:59789"/>
        <dbReference type="ChEBI" id="CHEBI:131766"/>
        <dbReference type="EC" id="4.1.99.22"/>
    </reaction>
</comment>
<comment type="cofactor">
    <cofactor evidence="1">
        <name>[4Fe-4S] cluster</name>
        <dbReference type="ChEBI" id="CHEBI:49883"/>
    </cofactor>
    <text evidence="1">Binds 2 [4Fe-4S] clusters. Binds 1 [4Fe-4S] cluster coordinated with 3 cysteines and an exchangeable S-adenosyl-L-methionine and 1 [4Fe-4S] cluster coordinated with 3 cysteines and the GTP-derived substrate.</text>
</comment>
<comment type="pathway">
    <text evidence="1">Cofactor biosynthesis; molybdopterin biosynthesis.</text>
</comment>
<comment type="subunit">
    <text evidence="1">Monomer and homodimer.</text>
</comment>
<comment type="similarity">
    <text evidence="1">Belongs to the radical SAM superfamily. MoaA family.</text>
</comment>
<accession>B0CDZ6</accession>
<reference key="1">
    <citation type="journal article" date="2008" name="Proc. Natl. Acad. Sci. U.S.A.">
        <title>Niche adaptation and genome expansion in the chlorophyll d-producing cyanobacterium Acaryochloris marina.</title>
        <authorList>
            <person name="Swingley W.D."/>
            <person name="Chen M."/>
            <person name="Cheung P.C."/>
            <person name="Conrad A.L."/>
            <person name="Dejesa L.C."/>
            <person name="Hao J."/>
            <person name="Honchak B.M."/>
            <person name="Karbach L.E."/>
            <person name="Kurdoglu A."/>
            <person name="Lahiri S."/>
            <person name="Mastrian S.D."/>
            <person name="Miyashita H."/>
            <person name="Page L."/>
            <person name="Ramakrishna P."/>
            <person name="Satoh S."/>
            <person name="Sattley W.M."/>
            <person name="Shimada Y."/>
            <person name="Taylor H.L."/>
            <person name="Tomo T."/>
            <person name="Tsuchiya T."/>
            <person name="Wang Z.T."/>
            <person name="Raymond J."/>
            <person name="Mimuro M."/>
            <person name="Blankenship R.E."/>
            <person name="Touchman J.W."/>
        </authorList>
    </citation>
    <scope>NUCLEOTIDE SEQUENCE [LARGE SCALE GENOMIC DNA]</scope>
    <source>
        <strain>MBIC 11017</strain>
    </source>
</reference>
<organism>
    <name type="scientific">Acaryochloris marina (strain MBIC 11017)</name>
    <dbReference type="NCBI Taxonomy" id="329726"/>
    <lineage>
        <taxon>Bacteria</taxon>
        <taxon>Bacillati</taxon>
        <taxon>Cyanobacteriota</taxon>
        <taxon>Cyanophyceae</taxon>
        <taxon>Acaryochloridales</taxon>
        <taxon>Acaryochloridaceae</taxon>
        <taxon>Acaryochloris</taxon>
    </lineage>
</organism>
<protein>
    <recommendedName>
        <fullName evidence="1">GTP 3',8-cyclase</fullName>
        <ecNumber evidence="1">4.1.99.22</ecNumber>
    </recommendedName>
    <alternativeName>
        <fullName evidence="1">Molybdenum cofactor biosynthesis protein A</fullName>
    </alternativeName>
</protein>
<gene>
    <name evidence="1" type="primary">moaA</name>
    <name type="ordered locus">AM1_5516</name>
</gene>
<keyword id="KW-0004">4Fe-4S</keyword>
<keyword id="KW-0342">GTP-binding</keyword>
<keyword id="KW-0408">Iron</keyword>
<keyword id="KW-0411">Iron-sulfur</keyword>
<keyword id="KW-0456">Lyase</keyword>
<keyword id="KW-0479">Metal-binding</keyword>
<keyword id="KW-0501">Molybdenum cofactor biosynthesis</keyword>
<keyword id="KW-0547">Nucleotide-binding</keyword>
<keyword id="KW-1185">Reference proteome</keyword>
<keyword id="KW-0949">S-adenosyl-L-methionine</keyword>
<evidence type="ECO:0000255" key="1">
    <source>
        <dbReference type="HAMAP-Rule" id="MF_01225"/>
    </source>
</evidence>
<evidence type="ECO:0000255" key="2">
    <source>
        <dbReference type="PROSITE-ProRule" id="PRU01266"/>
    </source>
</evidence>
<proteinExistence type="inferred from homology"/>